<comment type="function">
    <text evidence="1">Part of the Sec protein translocase complex. Interacts with the SecYEG preprotein conducting channel. Has a central role in coupling the hydrolysis of ATP to the transfer of proteins into and across the cell membrane, serving both as a receptor for the preprotein-SecB complex and as an ATP-driven molecular motor driving the stepwise translocation of polypeptide chains across the membrane.</text>
</comment>
<comment type="catalytic activity">
    <reaction evidence="1">
        <text>ATP + H2O + cellular proteinSide 1 = ADP + phosphate + cellular proteinSide 2.</text>
        <dbReference type="EC" id="7.4.2.8"/>
    </reaction>
</comment>
<comment type="cofactor">
    <cofactor evidence="1">
        <name>Zn(2+)</name>
        <dbReference type="ChEBI" id="CHEBI:29105"/>
    </cofactor>
    <text evidence="1">May bind 1 zinc ion per subunit.</text>
</comment>
<comment type="subunit">
    <text evidence="1">Monomer and homodimer. Part of the essential Sec protein translocation apparatus which comprises SecA, SecYEG and auxiliary proteins SecDF-YajC and YidC.</text>
</comment>
<comment type="subcellular location">
    <subcellularLocation>
        <location evidence="1">Cell inner membrane</location>
        <topology evidence="1">Peripheral membrane protein</topology>
        <orientation evidence="1">Cytoplasmic side</orientation>
    </subcellularLocation>
    <subcellularLocation>
        <location evidence="1">Cytoplasm</location>
    </subcellularLocation>
    <text evidence="1">Distribution is 50-50.</text>
</comment>
<comment type="similarity">
    <text evidence="1">Belongs to the SecA family.</text>
</comment>
<sequence length="931" mass="104385">MTTGFLQKIFGSRNQRLVKQYQKTVAAINALETQIETLTDDQLRGKTGEFRQRIAAGESLDKLLPEAFAVCREASRRVLKMRHFDVQMIGGMVLHYGKIAEMRTGEGKTLVATLAAYLNALAGRGVHVVTVNDYLAQRDAEWMGRLYNFLGLSVGINLSGMEHDQKQAAYAADITYGTNNEFGFDYLRDNMVYETDSRVQRPLNFAVVDEVDSILIDEARTPLIISGQAEDHTELYVRMNALPPLLERQIGEEKADGTGVEKPGDYTLDEKGRQVFLTESGHEKAERMLAEWGLIGDGESLYAPQNITLMHHVYAALRAHTLFHRDQHYVVQNDEVIIVDEFTGRLMPGRRWSDGLHQAVEAKEHVKIQSENQTLASITFQNYFRMYAKLSGMTGTADTEAYEFNEIYGLETVVIPTNRPPKRIDKQDQIYKTAKERYDAVIRDIRECHERGQPVLVGTTSIENSELLSHLLKQAGLPHEVLNAKQHAREAAIVAEAGRPKRITIATNMAGRGTDIVLGGNVEKQAAFIEADESIPADEKARRIQQLHDEWETLHEQVKTAGGLHIIGTERHESRRIDNQLRGRAGRQGDPGSSRFYLSLEDPLLRIFAGDRVRAIMDRLKMPEGEAIEAGIVTRSIESAQRKVEARNFDIRKQLLEYDDVSNDQRKVIYQQRNELLEAHDIAETIGAMRHGVISEVVRQFVPAGSIEEQWDLPELEETLRNDWQLDLAIQEMVNESSSINADEILDAVTTAADEHYEAKVALVGRESFSAFERSIMLQTLDRLWREHLAALDHLRQGIHLRGYAQKNPKQEYKREAFELFAAMLDAVKQEVTRIVMNVQIQSPEQLEEAAEQIEEQGGQLGNVEFQHADFAAAAAAATAGGAVVADATAEMVGHAMSHSGPAGEVPRVGRNDPCPCGSGKKYKHCHGKLN</sequence>
<organism>
    <name type="scientific">Burkholderia mallei (strain NCTC 10247)</name>
    <dbReference type="NCBI Taxonomy" id="320389"/>
    <lineage>
        <taxon>Bacteria</taxon>
        <taxon>Pseudomonadati</taxon>
        <taxon>Pseudomonadota</taxon>
        <taxon>Betaproteobacteria</taxon>
        <taxon>Burkholderiales</taxon>
        <taxon>Burkholderiaceae</taxon>
        <taxon>Burkholderia</taxon>
        <taxon>pseudomallei group</taxon>
    </lineage>
</organism>
<gene>
    <name evidence="1" type="primary">secA</name>
    <name type="ordered locus">BMA10247_3242</name>
</gene>
<dbReference type="EC" id="7.4.2.8" evidence="1"/>
<dbReference type="EMBL" id="CP000548">
    <property type="protein sequence ID" value="ABO06329.1"/>
    <property type="molecule type" value="Genomic_DNA"/>
</dbReference>
<dbReference type="RefSeq" id="WP_004194125.1">
    <property type="nucleotide sequence ID" value="NZ_CP007802.1"/>
</dbReference>
<dbReference type="SMR" id="A3MR73"/>
<dbReference type="GeneID" id="92980233"/>
<dbReference type="KEGG" id="bmaz:BM44_128"/>
<dbReference type="KEGG" id="bmn:BMA10247_3242"/>
<dbReference type="PATRIC" id="fig|320389.8.peg.136"/>
<dbReference type="GO" id="GO:0031522">
    <property type="term" value="C:cell envelope Sec protein transport complex"/>
    <property type="evidence" value="ECO:0007669"/>
    <property type="project" value="TreeGrafter"/>
</dbReference>
<dbReference type="GO" id="GO:0005829">
    <property type="term" value="C:cytosol"/>
    <property type="evidence" value="ECO:0007669"/>
    <property type="project" value="TreeGrafter"/>
</dbReference>
<dbReference type="GO" id="GO:0005886">
    <property type="term" value="C:plasma membrane"/>
    <property type="evidence" value="ECO:0007669"/>
    <property type="project" value="UniProtKB-SubCell"/>
</dbReference>
<dbReference type="GO" id="GO:0005524">
    <property type="term" value="F:ATP binding"/>
    <property type="evidence" value="ECO:0007669"/>
    <property type="project" value="UniProtKB-UniRule"/>
</dbReference>
<dbReference type="GO" id="GO:0046872">
    <property type="term" value="F:metal ion binding"/>
    <property type="evidence" value="ECO:0007669"/>
    <property type="project" value="UniProtKB-KW"/>
</dbReference>
<dbReference type="GO" id="GO:0008564">
    <property type="term" value="F:protein-exporting ATPase activity"/>
    <property type="evidence" value="ECO:0007669"/>
    <property type="project" value="UniProtKB-EC"/>
</dbReference>
<dbReference type="GO" id="GO:0065002">
    <property type="term" value="P:intracellular protein transmembrane transport"/>
    <property type="evidence" value="ECO:0007669"/>
    <property type="project" value="UniProtKB-UniRule"/>
</dbReference>
<dbReference type="GO" id="GO:0017038">
    <property type="term" value="P:protein import"/>
    <property type="evidence" value="ECO:0007669"/>
    <property type="project" value="InterPro"/>
</dbReference>
<dbReference type="GO" id="GO:0006605">
    <property type="term" value="P:protein targeting"/>
    <property type="evidence" value="ECO:0007669"/>
    <property type="project" value="UniProtKB-UniRule"/>
</dbReference>
<dbReference type="GO" id="GO:0043952">
    <property type="term" value="P:protein transport by the Sec complex"/>
    <property type="evidence" value="ECO:0007669"/>
    <property type="project" value="TreeGrafter"/>
</dbReference>
<dbReference type="CDD" id="cd17928">
    <property type="entry name" value="DEXDc_SecA"/>
    <property type="match status" value="1"/>
</dbReference>
<dbReference type="CDD" id="cd18803">
    <property type="entry name" value="SF2_C_secA"/>
    <property type="match status" value="1"/>
</dbReference>
<dbReference type="FunFam" id="3.40.50.300:FF:000081">
    <property type="entry name" value="Preprotein translocase subunit SecA"/>
    <property type="match status" value="1"/>
</dbReference>
<dbReference type="FunFam" id="3.40.50.300:FF:000113">
    <property type="entry name" value="Preprotein translocase subunit SecA"/>
    <property type="match status" value="1"/>
</dbReference>
<dbReference type="FunFam" id="3.90.1440.10:FF:000001">
    <property type="entry name" value="Preprotein translocase subunit SecA"/>
    <property type="match status" value="1"/>
</dbReference>
<dbReference type="FunFam" id="1.10.3060.10:FF:000003">
    <property type="entry name" value="Protein translocase subunit SecA"/>
    <property type="match status" value="1"/>
</dbReference>
<dbReference type="Gene3D" id="1.10.3060.10">
    <property type="entry name" value="Helical scaffold and wing domains of SecA"/>
    <property type="match status" value="1"/>
</dbReference>
<dbReference type="Gene3D" id="3.40.50.300">
    <property type="entry name" value="P-loop containing nucleotide triphosphate hydrolases"/>
    <property type="match status" value="2"/>
</dbReference>
<dbReference type="Gene3D" id="3.90.1440.10">
    <property type="entry name" value="SecA, preprotein cross-linking domain"/>
    <property type="match status" value="1"/>
</dbReference>
<dbReference type="HAMAP" id="MF_01382">
    <property type="entry name" value="SecA"/>
    <property type="match status" value="1"/>
</dbReference>
<dbReference type="InterPro" id="IPR014001">
    <property type="entry name" value="Helicase_ATP-bd"/>
</dbReference>
<dbReference type="InterPro" id="IPR001650">
    <property type="entry name" value="Helicase_C-like"/>
</dbReference>
<dbReference type="InterPro" id="IPR027417">
    <property type="entry name" value="P-loop_NTPase"/>
</dbReference>
<dbReference type="InterPro" id="IPR004027">
    <property type="entry name" value="SEC_C_motif"/>
</dbReference>
<dbReference type="InterPro" id="IPR000185">
    <property type="entry name" value="SecA"/>
</dbReference>
<dbReference type="InterPro" id="IPR020937">
    <property type="entry name" value="SecA_CS"/>
</dbReference>
<dbReference type="InterPro" id="IPR011115">
    <property type="entry name" value="SecA_DEAD"/>
</dbReference>
<dbReference type="InterPro" id="IPR014018">
    <property type="entry name" value="SecA_motor_DEAD"/>
</dbReference>
<dbReference type="InterPro" id="IPR011130">
    <property type="entry name" value="SecA_preprotein_X-link_dom"/>
</dbReference>
<dbReference type="InterPro" id="IPR044722">
    <property type="entry name" value="SecA_SF2_C"/>
</dbReference>
<dbReference type="InterPro" id="IPR011116">
    <property type="entry name" value="SecA_Wing/Scaffold"/>
</dbReference>
<dbReference type="InterPro" id="IPR036266">
    <property type="entry name" value="SecA_Wing/Scaffold_sf"/>
</dbReference>
<dbReference type="InterPro" id="IPR036670">
    <property type="entry name" value="SecA_X-link_sf"/>
</dbReference>
<dbReference type="NCBIfam" id="NF009538">
    <property type="entry name" value="PRK12904.1"/>
    <property type="match status" value="1"/>
</dbReference>
<dbReference type="NCBIfam" id="TIGR00963">
    <property type="entry name" value="secA"/>
    <property type="match status" value="1"/>
</dbReference>
<dbReference type="PANTHER" id="PTHR30612:SF0">
    <property type="entry name" value="CHLOROPLAST PROTEIN-TRANSPORTING ATPASE"/>
    <property type="match status" value="1"/>
</dbReference>
<dbReference type="PANTHER" id="PTHR30612">
    <property type="entry name" value="SECA INNER MEMBRANE COMPONENT OF SEC PROTEIN SECRETION SYSTEM"/>
    <property type="match status" value="1"/>
</dbReference>
<dbReference type="Pfam" id="PF21090">
    <property type="entry name" value="P-loop_SecA"/>
    <property type="match status" value="1"/>
</dbReference>
<dbReference type="Pfam" id="PF02810">
    <property type="entry name" value="SEC-C"/>
    <property type="match status" value="1"/>
</dbReference>
<dbReference type="Pfam" id="PF07517">
    <property type="entry name" value="SecA_DEAD"/>
    <property type="match status" value="1"/>
</dbReference>
<dbReference type="Pfam" id="PF01043">
    <property type="entry name" value="SecA_PP_bind"/>
    <property type="match status" value="1"/>
</dbReference>
<dbReference type="Pfam" id="PF07516">
    <property type="entry name" value="SecA_SW"/>
    <property type="match status" value="1"/>
</dbReference>
<dbReference type="PRINTS" id="PR00906">
    <property type="entry name" value="SECA"/>
</dbReference>
<dbReference type="SMART" id="SM00957">
    <property type="entry name" value="SecA_DEAD"/>
    <property type="match status" value="1"/>
</dbReference>
<dbReference type="SMART" id="SM00958">
    <property type="entry name" value="SecA_PP_bind"/>
    <property type="match status" value="1"/>
</dbReference>
<dbReference type="SUPFAM" id="SSF81886">
    <property type="entry name" value="Helical scaffold and wing domains of SecA"/>
    <property type="match status" value="1"/>
</dbReference>
<dbReference type="SUPFAM" id="SSF52540">
    <property type="entry name" value="P-loop containing nucleoside triphosphate hydrolases"/>
    <property type="match status" value="2"/>
</dbReference>
<dbReference type="SUPFAM" id="SSF81767">
    <property type="entry name" value="Pre-protein crosslinking domain of SecA"/>
    <property type="match status" value="1"/>
</dbReference>
<dbReference type="PROSITE" id="PS01312">
    <property type="entry name" value="SECA"/>
    <property type="match status" value="1"/>
</dbReference>
<dbReference type="PROSITE" id="PS51196">
    <property type="entry name" value="SECA_MOTOR_DEAD"/>
    <property type="match status" value="1"/>
</dbReference>
<protein>
    <recommendedName>
        <fullName evidence="1">Protein translocase subunit SecA</fullName>
        <ecNumber evidence="1">7.4.2.8</ecNumber>
    </recommendedName>
</protein>
<reference key="1">
    <citation type="journal article" date="2010" name="Genome Biol. Evol.">
        <title>Continuing evolution of Burkholderia mallei through genome reduction and large-scale rearrangements.</title>
        <authorList>
            <person name="Losada L."/>
            <person name="Ronning C.M."/>
            <person name="DeShazer D."/>
            <person name="Woods D."/>
            <person name="Fedorova N."/>
            <person name="Kim H.S."/>
            <person name="Shabalina S.A."/>
            <person name="Pearson T.R."/>
            <person name="Brinkac L."/>
            <person name="Tan P."/>
            <person name="Nandi T."/>
            <person name="Crabtree J."/>
            <person name="Badger J."/>
            <person name="Beckstrom-Sternberg S."/>
            <person name="Saqib M."/>
            <person name="Schutzer S.E."/>
            <person name="Keim P."/>
            <person name="Nierman W.C."/>
        </authorList>
    </citation>
    <scope>NUCLEOTIDE SEQUENCE [LARGE SCALE GENOMIC DNA]</scope>
    <source>
        <strain>NCTC 10247</strain>
    </source>
</reference>
<accession>A3MR73</accession>
<name>SECA_BURM7</name>
<evidence type="ECO:0000255" key="1">
    <source>
        <dbReference type="HAMAP-Rule" id="MF_01382"/>
    </source>
</evidence>
<proteinExistence type="inferred from homology"/>
<keyword id="KW-0067">ATP-binding</keyword>
<keyword id="KW-0997">Cell inner membrane</keyword>
<keyword id="KW-1003">Cell membrane</keyword>
<keyword id="KW-0963">Cytoplasm</keyword>
<keyword id="KW-0472">Membrane</keyword>
<keyword id="KW-0479">Metal-binding</keyword>
<keyword id="KW-0547">Nucleotide-binding</keyword>
<keyword id="KW-0653">Protein transport</keyword>
<keyword id="KW-1278">Translocase</keyword>
<keyword id="KW-0811">Translocation</keyword>
<keyword id="KW-0813">Transport</keyword>
<keyword id="KW-0862">Zinc</keyword>
<feature type="chain" id="PRO_0000320751" description="Protein translocase subunit SecA">
    <location>
        <begin position="1"/>
        <end position="931"/>
    </location>
</feature>
<feature type="binding site" evidence="1">
    <location>
        <position position="87"/>
    </location>
    <ligand>
        <name>ATP</name>
        <dbReference type="ChEBI" id="CHEBI:30616"/>
    </ligand>
</feature>
<feature type="binding site" evidence="1">
    <location>
        <begin position="105"/>
        <end position="109"/>
    </location>
    <ligand>
        <name>ATP</name>
        <dbReference type="ChEBI" id="CHEBI:30616"/>
    </ligand>
</feature>
<feature type="binding site" evidence="1">
    <location>
        <position position="515"/>
    </location>
    <ligand>
        <name>ATP</name>
        <dbReference type="ChEBI" id="CHEBI:30616"/>
    </ligand>
</feature>
<feature type="binding site" evidence="1">
    <location>
        <position position="915"/>
    </location>
    <ligand>
        <name>Zn(2+)</name>
        <dbReference type="ChEBI" id="CHEBI:29105"/>
    </ligand>
</feature>
<feature type="binding site" evidence="1">
    <location>
        <position position="917"/>
    </location>
    <ligand>
        <name>Zn(2+)</name>
        <dbReference type="ChEBI" id="CHEBI:29105"/>
    </ligand>
</feature>
<feature type="binding site" evidence="1">
    <location>
        <position position="926"/>
    </location>
    <ligand>
        <name>Zn(2+)</name>
        <dbReference type="ChEBI" id="CHEBI:29105"/>
    </ligand>
</feature>
<feature type="binding site" evidence="1">
    <location>
        <position position="927"/>
    </location>
    <ligand>
        <name>Zn(2+)</name>
        <dbReference type="ChEBI" id="CHEBI:29105"/>
    </ligand>
</feature>